<proteinExistence type="inferred from homology"/>
<comment type="function">
    <text evidence="1">The glycine cleavage system catalyzes the degradation of glycine. The P protein binds the alpha-amino group of glycine through its pyridoxal phosphate cofactor; CO(2) is released and the remaining methylamine moiety is then transferred to the lipoamide cofactor of the H protein.</text>
</comment>
<comment type="catalytic activity">
    <reaction evidence="1">
        <text>N(6)-[(R)-lipoyl]-L-lysyl-[glycine-cleavage complex H protein] + glycine + H(+) = N(6)-[(R)-S(8)-aminomethyldihydrolipoyl]-L-lysyl-[glycine-cleavage complex H protein] + CO2</text>
        <dbReference type="Rhea" id="RHEA:24304"/>
        <dbReference type="Rhea" id="RHEA-COMP:10494"/>
        <dbReference type="Rhea" id="RHEA-COMP:10495"/>
        <dbReference type="ChEBI" id="CHEBI:15378"/>
        <dbReference type="ChEBI" id="CHEBI:16526"/>
        <dbReference type="ChEBI" id="CHEBI:57305"/>
        <dbReference type="ChEBI" id="CHEBI:83099"/>
        <dbReference type="ChEBI" id="CHEBI:83143"/>
        <dbReference type="EC" id="1.4.4.2"/>
    </reaction>
</comment>
<comment type="cofactor">
    <cofactor evidence="1">
        <name>pyridoxal 5'-phosphate</name>
        <dbReference type="ChEBI" id="CHEBI:597326"/>
    </cofactor>
</comment>
<comment type="subunit">
    <text evidence="1">The glycine cleavage system is composed of four proteins: P, T, L and H.</text>
</comment>
<comment type="similarity">
    <text evidence="1">Belongs to the GcvP family.</text>
</comment>
<sequence>MTKSLSDLLQTNDFTRRHIGPSEAEQAEMLGVLGVSSLDELTQTTLPAAIQFDGELHTGPGMTEAQALAELKAVAQKNKVFRSYIGMGYAGTDVPPVILRNMLENPGWYTAYTPYQAEISQGRLEMLLNFQQTVQDMTGMPVSNASLLDEATAAAEAMTLAKRQSKNKGSNVFFVADNVHPQTMDVVKTRAEYFGFEVQTGSADAIPEGAFGALVQYPGTHGEVLNLAPIAEKAHTQGAALIVATDLLACALLTPPGEQGADIVVGSAQRFGVPMGFGGPHAAFLACQKGFERSMPGRVIGVSKDVRGNTALRMAMQTREQHIRREKATSNICTAQALLANMAAAYAVWHGPEGIKTIAERVHRLTGILAKALQDAGIKANETFFDTLTFEGQDDLGARAEAKGINFRLDGGKVGISLDETVTPQDLADIIEVVTGKGVDVQKLDAEAVDGIPAPLKRQSDFLTHPVFNTHHSEHGMLRYLKQLENKDYSLTHGMIPLGSCTMKLNATTEMIPVTWPEFGGLHPFAPESQTQGYAEMLAELERWLADITGYDAVSMQPNSGAQGEYAGLLVIRKYHEARGEAHRNICLIPASAHGTNPASAAMMGMQVVVVKTDEQGNIDFDDLKAQAEAHSDHLAALMITYPSTHGVYEENVRDVCDLIHQHGGQVYLDGANMNAMVGVAKPGLIGGDVSHLNLHKTFAIPHGGGGPGMGPIGVKAHLAPFLPNHAVAPTSDSHTGAVSAAPYGSASILPISYLYIKLLGAAGLRQSTQVALLNANYIAKRLSGAFPVLYSGKGGRVAHECILDIRPLKQESGVSEEDIAKRLMDYGFHAPTMSFPVPGTLMIEPTESEPKAELDRFVDAMLNIRREIQDVQDGTISAADSPLKHAPHTLKDLMDSEWTRAYSRETGAFPSAAQKAWKYWPAVNRVDNVYGDRNFVCSCPPIEDYIGA</sequence>
<accession>Q9RTF5</accession>
<gene>
    <name evidence="1" type="primary">gcvP</name>
    <name type="ordered locus">DR_1809</name>
</gene>
<keyword id="KW-0560">Oxidoreductase</keyword>
<keyword id="KW-0663">Pyridoxal phosphate</keyword>
<keyword id="KW-1185">Reference proteome</keyword>
<name>GCSP_DEIRA</name>
<reference key="1">
    <citation type="journal article" date="1999" name="Science">
        <title>Genome sequence of the radioresistant bacterium Deinococcus radiodurans R1.</title>
        <authorList>
            <person name="White O."/>
            <person name="Eisen J.A."/>
            <person name="Heidelberg J.F."/>
            <person name="Hickey E.K."/>
            <person name="Peterson J.D."/>
            <person name="Dodson R.J."/>
            <person name="Haft D.H."/>
            <person name="Gwinn M.L."/>
            <person name="Nelson W.C."/>
            <person name="Richardson D.L."/>
            <person name="Moffat K.S."/>
            <person name="Qin H."/>
            <person name="Jiang L."/>
            <person name="Pamphile W."/>
            <person name="Crosby M."/>
            <person name="Shen M."/>
            <person name="Vamathevan J.J."/>
            <person name="Lam P."/>
            <person name="McDonald L.A."/>
            <person name="Utterback T.R."/>
            <person name="Zalewski C."/>
            <person name="Makarova K.S."/>
            <person name="Aravind L."/>
            <person name="Daly M.J."/>
            <person name="Minton K.W."/>
            <person name="Fleischmann R.D."/>
            <person name="Ketchum K.A."/>
            <person name="Nelson K.E."/>
            <person name="Salzberg S.L."/>
            <person name="Smith H.O."/>
            <person name="Venter J.C."/>
            <person name="Fraser C.M."/>
        </authorList>
    </citation>
    <scope>NUCLEOTIDE SEQUENCE [LARGE SCALE GENOMIC DNA]</scope>
    <source>
        <strain>ATCC 13939 / DSM 20539 / JCM 16871 / CCUG 27074 / LMG 4051 / NBRC 15346 / NCIMB 9279 / VKM B-1422 / R1</strain>
    </source>
</reference>
<feature type="chain" id="PRO_0000166912" description="Glycine dehydrogenase (decarboxylating)">
    <location>
        <begin position="1"/>
        <end position="949"/>
    </location>
</feature>
<feature type="modified residue" description="N6-(pyridoxal phosphate)lysine" evidence="1">
    <location>
        <position position="697"/>
    </location>
</feature>
<dbReference type="EC" id="1.4.4.2" evidence="1"/>
<dbReference type="EMBL" id="AE000513">
    <property type="protein sequence ID" value="AAF11360.1"/>
    <property type="molecule type" value="Genomic_DNA"/>
</dbReference>
<dbReference type="PIR" id="E75352">
    <property type="entry name" value="E75352"/>
</dbReference>
<dbReference type="RefSeq" id="NP_295532.1">
    <property type="nucleotide sequence ID" value="NC_001263.1"/>
</dbReference>
<dbReference type="RefSeq" id="WP_010888444.1">
    <property type="nucleotide sequence ID" value="NC_001263.1"/>
</dbReference>
<dbReference type="SMR" id="Q9RTF5"/>
<dbReference type="STRING" id="243230.DR_1809"/>
<dbReference type="PaxDb" id="243230-DR_1809"/>
<dbReference type="EnsemblBacteria" id="AAF11360">
    <property type="protein sequence ID" value="AAF11360"/>
    <property type="gene ID" value="DR_1809"/>
</dbReference>
<dbReference type="GeneID" id="69518049"/>
<dbReference type="KEGG" id="dra:DR_1809"/>
<dbReference type="PATRIC" id="fig|243230.17.peg.2021"/>
<dbReference type="eggNOG" id="COG0403">
    <property type="taxonomic scope" value="Bacteria"/>
</dbReference>
<dbReference type="eggNOG" id="COG1003">
    <property type="taxonomic scope" value="Bacteria"/>
</dbReference>
<dbReference type="HOGENOM" id="CLU_004620_1_1_0"/>
<dbReference type="InParanoid" id="Q9RTF5"/>
<dbReference type="OrthoDB" id="9801272at2"/>
<dbReference type="Proteomes" id="UP000002524">
    <property type="component" value="Chromosome 1"/>
</dbReference>
<dbReference type="GO" id="GO:0005829">
    <property type="term" value="C:cytosol"/>
    <property type="evidence" value="ECO:0000318"/>
    <property type="project" value="GO_Central"/>
</dbReference>
<dbReference type="GO" id="GO:0005960">
    <property type="term" value="C:glycine cleavage complex"/>
    <property type="evidence" value="ECO:0000318"/>
    <property type="project" value="GO_Central"/>
</dbReference>
<dbReference type="GO" id="GO:0016594">
    <property type="term" value="F:glycine binding"/>
    <property type="evidence" value="ECO:0000318"/>
    <property type="project" value="GO_Central"/>
</dbReference>
<dbReference type="GO" id="GO:0004375">
    <property type="term" value="F:glycine dehydrogenase (decarboxylating) activity"/>
    <property type="evidence" value="ECO:0000318"/>
    <property type="project" value="GO_Central"/>
</dbReference>
<dbReference type="GO" id="GO:0030170">
    <property type="term" value="F:pyridoxal phosphate binding"/>
    <property type="evidence" value="ECO:0000318"/>
    <property type="project" value="GO_Central"/>
</dbReference>
<dbReference type="GO" id="GO:0019464">
    <property type="term" value="P:glycine decarboxylation via glycine cleavage system"/>
    <property type="evidence" value="ECO:0000318"/>
    <property type="project" value="GO_Central"/>
</dbReference>
<dbReference type="CDD" id="cd00613">
    <property type="entry name" value="GDC-P"/>
    <property type="match status" value="2"/>
</dbReference>
<dbReference type="FunFam" id="3.40.640.10:FF:000005">
    <property type="entry name" value="Glycine dehydrogenase (decarboxylating), mitochondrial"/>
    <property type="match status" value="1"/>
</dbReference>
<dbReference type="FunFam" id="3.90.1150.10:FF:000007">
    <property type="entry name" value="Glycine dehydrogenase (decarboxylating), mitochondrial"/>
    <property type="match status" value="1"/>
</dbReference>
<dbReference type="FunFam" id="3.40.640.10:FF:000007">
    <property type="entry name" value="glycine dehydrogenase (Decarboxylating), mitochondrial"/>
    <property type="match status" value="1"/>
</dbReference>
<dbReference type="Gene3D" id="3.90.1150.10">
    <property type="entry name" value="Aspartate Aminotransferase, domain 1"/>
    <property type="match status" value="1"/>
</dbReference>
<dbReference type="Gene3D" id="3.40.640.10">
    <property type="entry name" value="Type I PLP-dependent aspartate aminotransferase-like (Major domain)"/>
    <property type="match status" value="2"/>
</dbReference>
<dbReference type="HAMAP" id="MF_00711">
    <property type="entry name" value="GcvP"/>
    <property type="match status" value="1"/>
</dbReference>
<dbReference type="InterPro" id="IPR003437">
    <property type="entry name" value="GcvP"/>
</dbReference>
<dbReference type="InterPro" id="IPR049316">
    <property type="entry name" value="GDC-P_C"/>
</dbReference>
<dbReference type="InterPro" id="IPR049315">
    <property type="entry name" value="GDC-P_N"/>
</dbReference>
<dbReference type="InterPro" id="IPR020581">
    <property type="entry name" value="GDC_P"/>
</dbReference>
<dbReference type="InterPro" id="IPR015424">
    <property type="entry name" value="PyrdxlP-dep_Trfase"/>
</dbReference>
<dbReference type="InterPro" id="IPR015421">
    <property type="entry name" value="PyrdxlP-dep_Trfase_major"/>
</dbReference>
<dbReference type="InterPro" id="IPR015422">
    <property type="entry name" value="PyrdxlP-dep_Trfase_small"/>
</dbReference>
<dbReference type="NCBIfam" id="TIGR00461">
    <property type="entry name" value="gcvP"/>
    <property type="match status" value="1"/>
</dbReference>
<dbReference type="NCBIfam" id="NF003346">
    <property type="entry name" value="PRK04366.1"/>
    <property type="match status" value="1"/>
</dbReference>
<dbReference type="PANTHER" id="PTHR11773:SF1">
    <property type="entry name" value="GLYCINE DEHYDROGENASE (DECARBOXYLATING), MITOCHONDRIAL"/>
    <property type="match status" value="1"/>
</dbReference>
<dbReference type="PANTHER" id="PTHR11773">
    <property type="entry name" value="GLYCINE DEHYDROGENASE, DECARBOXYLATING"/>
    <property type="match status" value="1"/>
</dbReference>
<dbReference type="Pfam" id="PF21478">
    <property type="entry name" value="GcvP2_C"/>
    <property type="match status" value="1"/>
</dbReference>
<dbReference type="Pfam" id="PF02347">
    <property type="entry name" value="GDC-P"/>
    <property type="match status" value="2"/>
</dbReference>
<dbReference type="SUPFAM" id="SSF53383">
    <property type="entry name" value="PLP-dependent transferases"/>
    <property type="match status" value="2"/>
</dbReference>
<organism>
    <name type="scientific">Deinococcus radiodurans (strain ATCC 13939 / DSM 20539 / JCM 16871 / CCUG 27074 / LMG 4051 / NBRC 15346 / NCIMB 9279 / VKM B-1422 / R1)</name>
    <dbReference type="NCBI Taxonomy" id="243230"/>
    <lineage>
        <taxon>Bacteria</taxon>
        <taxon>Thermotogati</taxon>
        <taxon>Deinococcota</taxon>
        <taxon>Deinococci</taxon>
        <taxon>Deinococcales</taxon>
        <taxon>Deinococcaceae</taxon>
        <taxon>Deinococcus</taxon>
    </lineage>
</organism>
<protein>
    <recommendedName>
        <fullName evidence="1">Glycine dehydrogenase (decarboxylating)</fullName>
        <ecNumber evidence="1">1.4.4.2</ecNumber>
    </recommendedName>
    <alternativeName>
        <fullName evidence="1">Glycine cleavage system P-protein</fullName>
    </alternativeName>
    <alternativeName>
        <fullName evidence="1">Glycine decarboxylase</fullName>
    </alternativeName>
    <alternativeName>
        <fullName evidence="1">Glycine dehydrogenase (aminomethyl-transferring)</fullName>
    </alternativeName>
</protein>
<evidence type="ECO:0000255" key="1">
    <source>
        <dbReference type="HAMAP-Rule" id="MF_00711"/>
    </source>
</evidence>